<comment type="cofactor">
    <cofactor evidence="1">
        <name>Zn(2+)</name>
        <dbReference type="ChEBI" id="CHEBI:29105"/>
    </cofactor>
    <text evidence="1">Binds 1 zinc ion.</text>
</comment>
<comment type="subcellular location">
    <subcellularLocation>
        <location evidence="1">Cytoplasm</location>
    </subcellularLocation>
</comment>
<comment type="similarity">
    <text evidence="1">Belongs to the SprT family.</text>
</comment>
<organism>
    <name type="scientific">Escherichia coli O139:H28 (strain E24377A / ETEC)</name>
    <dbReference type="NCBI Taxonomy" id="331111"/>
    <lineage>
        <taxon>Bacteria</taxon>
        <taxon>Pseudomonadati</taxon>
        <taxon>Pseudomonadota</taxon>
        <taxon>Gammaproteobacteria</taxon>
        <taxon>Enterobacterales</taxon>
        <taxon>Enterobacteriaceae</taxon>
        <taxon>Escherichia</taxon>
    </lineage>
</organism>
<name>SPRT_ECO24</name>
<evidence type="ECO:0000255" key="1">
    <source>
        <dbReference type="HAMAP-Rule" id="MF_00746"/>
    </source>
</evidence>
<protein>
    <recommendedName>
        <fullName evidence="1">Protein SprT</fullName>
    </recommendedName>
</protein>
<accession>A7ZR67</accession>
<keyword id="KW-0963">Cytoplasm</keyword>
<keyword id="KW-0479">Metal-binding</keyword>
<keyword id="KW-1185">Reference proteome</keyword>
<keyword id="KW-0862">Zinc</keyword>
<dbReference type="EMBL" id="CP000800">
    <property type="protein sequence ID" value="ABV20007.1"/>
    <property type="molecule type" value="Genomic_DNA"/>
</dbReference>
<dbReference type="RefSeq" id="WP_001495390.1">
    <property type="nucleotide sequence ID" value="NC_009801.1"/>
</dbReference>
<dbReference type="KEGG" id="ecw:EcE24377A_3287"/>
<dbReference type="HOGENOM" id="CLU_113336_0_1_6"/>
<dbReference type="Proteomes" id="UP000001122">
    <property type="component" value="Chromosome"/>
</dbReference>
<dbReference type="GO" id="GO:0005737">
    <property type="term" value="C:cytoplasm"/>
    <property type="evidence" value="ECO:0007669"/>
    <property type="project" value="UniProtKB-SubCell"/>
</dbReference>
<dbReference type="GO" id="GO:0008270">
    <property type="term" value="F:zinc ion binding"/>
    <property type="evidence" value="ECO:0007669"/>
    <property type="project" value="UniProtKB-UniRule"/>
</dbReference>
<dbReference type="GO" id="GO:0006950">
    <property type="term" value="P:response to stress"/>
    <property type="evidence" value="ECO:0007669"/>
    <property type="project" value="UniProtKB-ARBA"/>
</dbReference>
<dbReference type="Gene3D" id="3.30.2010.10">
    <property type="entry name" value="Metalloproteases ('zincins'), catalytic domain"/>
    <property type="match status" value="1"/>
</dbReference>
<dbReference type="HAMAP" id="MF_00746">
    <property type="entry name" value="SprT"/>
    <property type="match status" value="1"/>
</dbReference>
<dbReference type="InterPro" id="IPR006640">
    <property type="entry name" value="SprT-like_domain"/>
</dbReference>
<dbReference type="InterPro" id="IPR035240">
    <property type="entry name" value="SprT_Zn_ribbon"/>
</dbReference>
<dbReference type="InterPro" id="IPR023483">
    <property type="entry name" value="Uncharacterised_SprT"/>
</dbReference>
<dbReference type="NCBIfam" id="NF003421">
    <property type="entry name" value="PRK04860.1"/>
    <property type="match status" value="1"/>
</dbReference>
<dbReference type="PANTHER" id="PTHR38773">
    <property type="entry name" value="PROTEIN SPRT"/>
    <property type="match status" value="1"/>
</dbReference>
<dbReference type="PANTHER" id="PTHR38773:SF1">
    <property type="entry name" value="PROTEIN SPRT"/>
    <property type="match status" value="1"/>
</dbReference>
<dbReference type="Pfam" id="PF10263">
    <property type="entry name" value="SprT-like"/>
    <property type="match status" value="1"/>
</dbReference>
<dbReference type="Pfam" id="PF17283">
    <property type="entry name" value="Zn_ribbon_SprT"/>
    <property type="match status" value="1"/>
</dbReference>
<dbReference type="SMART" id="SM00731">
    <property type="entry name" value="SprT"/>
    <property type="match status" value="1"/>
</dbReference>
<dbReference type="PROSITE" id="PS00142">
    <property type="entry name" value="ZINC_PROTEASE"/>
    <property type="match status" value="1"/>
</dbReference>
<proteinExistence type="inferred from homology"/>
<feature type="chain" id="PRO_1000062175" description="Protein SprT">
    <location>
        <begin position="1"/>
        <end position="165"/>
    </location>
</feature>
<feature type="domain" description="SprT-like" evidence="1">
    <location>
        <begin position="20"/>
        <end position="163"/>
    </location>
</feature>
<feature type="active site" evidence="1">
    <location>
        <position position="79"/>
    </location>
</feature>
<feature type="binding site" evidence="1">
    <location>
        <position position="78"/>
    </location>
    <ligand>
        <name>Zn(2+)</name>
        <dbReference type="ChEBI" id="CHEBI:29105"/>
    </ligand>
</feature>
<feature type="binding site" evidence="1">
    <location>
        <position position="82"/>
    </location>
    <ligand>
        <name>Zn(2+)</name>
        <dbReference type="ChEBI" id="CHEBI:29105"/>
    </ligand>
</feature>
<reference key="1">
    <citation type="journal article" date="2008" name="J. Bacteriol.">
        <title>The pangenome structure of Escherichia coli: comparative genomic analysis of E. coli commensal and pathogenic isolates.</title>
        <authorList>
            <person name="Rasko D.A."/>
            <person name="Rosovitz M.J."/>
            <person name="Myers G.S.A."/>
            <person name="Mongodin E.F."/>
            <person name="Fricke W.F."/>
            <person name="Gajer P."/>
            <person name="Crabtree J."/>
            <person name="Sebaihia M."/>
            <person name="Thomson N.R."/>
            <person name="Chaudhuri R."/>
            <person name="Henderson I.R."/>
            <person name="Sperandio V."/>
            <person name="Ravel J."/>
        </authorList>
    </citation>
    <scope>NUCLEOTIDE SEQUENCE [LARGE SCALE GENOMIC DNA]</scope>
    <source>
        <strain>E24377A / ETEC</strain>
    </source>
</reference>
<gene>
    <name evidence="1" type="primary">sprT</name>
    <name type="ordered locus">EcE24377A_3287</name>
</gene>
<sequence>MKTSRLPIAIQQAVMRRLREKLTQANLKLGRNYPEPKLSYTQRGTSAGTAWLESYEIRLNPVLLLENSEAFIEEVVPHELAHLLVWKHFGRVAPHGKEWKWMMESVLGVPARRTHQFELQSVRRNTFPYRCKCQEHQLTVRRHNRVVRGEAVYRCVHCGEQLVAK</sequence>